<proteinExistence type="evidence at protein level"/>
<protein>
    <recommendedName>
        <fullName>Major viral transcription factor ICP4 homolog</fullName>
    </recommendedName>
    <alternativeName>
        <fullName>Alpha-4 protein</fullName>
    </alternativeName>
    <alternativeName>
        <fullName>Infected cell protein 4</fullName>
    </alternativeName>
    <alternativeName>
        <fullName>Transcriptional activator IE175</fullName>
    </alternativeName>
</protein>
<gene>
    <name type="primary">ICP4</name>
    <name type="synonym">IE175</name>
    <name type="ORF">RS1</name>
</gene>
<keyword id="KW-0010">Activator</keyword>
<keyword id="KW-0013">ADP-ribosylation</keyword>
<keyword id="KW-0238">DNA-binding</keyword>
<keyword id="KW-0244">Early protein</keyword>
<keyword id="KW-1035">Host cytoplasm</keyword>
<keyword id="KW-1048">Host nucleus</keyword>
<keyword id="KW-0597">Phosphoprotein</keyword>
<keyword id="KW-1185">Reference proteome</keyword>
<keyword id="KW-0804">Transcription</keyword>
<keyword id="KW-0805">Transcription regulation</keyword>
<keyword id="KW-0946">Virion</keyword>
<keyword id="KW-0920">Virion tegument</keyword>
<reference key="1">
    <citation type="journal article" date="1998" name="J. Virol.">
        <title>The genome sequence of herpes simplex virus type 2.</title>
        <authorList>
            <person name="Dolan A."/>
            <person name="Jamieson F.E."/>
            <person name="Cunningham C."/>
            <person name="Barnett B.C."/>
            <person name="McGeoch D.J."/>
        </authorList>
    </citation>
    <scope>NUCLEOTIDE SEQUENCE [LARGE SCALE GENOMIC DNA]</scope>
</reference>
<reference key="2">
    <citation type="journal article" date="2018" name="Front. Immunol.">
        <title>Herpes Simplex Virus Type 2 Infection-Induced Expression of CXCR3 Ligands Promotes CD4+ T Cell Migration and Is Regulated by the Viral Immediate-Early Protein ICP4.</title>
        <authorList>
            <person name="Zhang M."/>
            <person name="Deng X."/>
            <person name="Guan X."/>
            <person name="Geng L."/>
            <person name="Fu M."/>
            <person name="Zhang B."/>
            <person name="Chen R."/>
            <person name="Hu H."/>
            <person name="Hu K."/>
            <person name="Zhang D."/>
            <person name="Li M."/>
            <person name="Liu Y."/>
            <person name="Gong S."/>
            <person name="Hu Q."/>
        </authorList>
    </citation>
    <scope>FUNCTION</scope>
    <scope>INTERACTION WITH HOST TBP</scope>
</reference>
<sequence>MSAEQRKKKKTTTTTQGRGAEVAMADEDGGRLRAAAETTGGPGSPDPADGPPPTPNPDRRPAARPGFGWHGGPEENEDEADDAAADADADEAAPASGEAVDEPAADGVVSPRQLALLASMVDEAVRTIPSPPPERDGAQEEAARSPSPPRTPSMRADYGEENDDDDDDDDDDDRDAGRWVRGPETTSAVRGAYPDPMASLSPRPPAPRRHHHHHHHRRRRAPRRRSAASDSSKSGSSSSASSASSSASSSSSASASSSDDDDDDDAARAPASAADHAAGGTLGADDEEAGVPARAPGAAPRPSPPRAEPAPARTPAATAGRLERRRARAAVAGRDATGRFTAGRPRRVELDADAASGAFYARYRDGYVSGEPWPGAGPPPPGRVLYGGLGDSRPGLWGAPEAEEARARFEASGAPAPVWAPELGDAAQQYALITRLLYTPDAEAMGWLQNPRVAPGDVALDQACFRISGAARNSSSFISGSVARAVPHLGYAMAAGRFGWGLAHVAAAVAMSRRYDRAQKGFLLTSLRRAYAPLLARENAALTGARTPDDGGDANRHDGDDARGKPAAAAAPLPSAAASPADERAVPAGYGAAGVLAALGRLSAAPASAPAGADDDDDDDGAGGGGGGRRAEAGRVAVECLAACRGILEALAEGFDGDLAAVPGLAGARPAAPPRPGPAGAAAPPHADAPRLRAWLRELRFVRDALVLMRLRGDLRVAGGSEAAVAAVRAVSLVAGALGPALPRSPRLLSSAAAAAADLLFQNQSLRPLLADTVAAADSLAAPASAPREARKRKSPAPARAPPGGAPRPPKKSRADAPRPAAAPPAGAAPPAPPTPPPRPPRPAALTRRPAEGPDPQGGWRRQPPGPSHTPAPSAAALEAYCAPRAVAELTDHPLFPAPWRPALMFDPRALASLAARCAAPPPGGAPAAFGPLRASGPLRRAAAWMRQVPDPEDVRVVILYSPLPGEDLAAGRAGGGPPPEWSAERGGLSCLLAALGNRLCGPATAAWAGNWTGAPDVSALGAQGVLLLSTRDLAFAGAVEFLGLLAGACDRRLIVVNAVRAADWPADGPVVSRQHAYLACEVLPAVQCAVRWPAARDLRRTVLASGRVFGPGVFARVEAAHARLYPDAPPLRLCRGANVRYRVRTRFGPDTLVPMSPREYRRAVLPALDGRAAASGAGDAMAPGAPDFCEDEAHSHRACARWGLGAPLRPVYVALGRDAVRGGPAELRGPRREFCARALLEPDGDAPPLVLRDDADAGPPPQIRWASAAGRAGTVLAAAGGGVEVVGTAAGLATPPRREPVDMDAELEDDDDGLFGE</sequence>
<feature type="chain" id="PRO_0000385460" description="Major viral transcription factor ICP4 homolog">
    <location>
        <begin position="1"/>
        <end position="1318"/>
    </location>
</feature>
<feature type="DNA-binding region" evidence="1">
    <location>
        <begin position="319"/>
        <end position="547"/>
    </location>
</feature>
<feature type="region of interest" description="Disordered" evidence="3">
    <location>
        <begin position="1"/>
        <end position="108"/>
    </location>
</feature>
<feature type="region of interest" description="Disordered" evidence="3">
    <location>
        <begin position="123"/>
        <end position="324"/>
    </location>
</feature>
<feature type="region of interest" description="Disordered" evidence="3">
    <location>
        <begin position="542"/>
        <end position="580"/>
    </location>
</feature>
<feature type="region of interest" description="Disordered" evidence="3">
    <location>
        <begin position="606"/>
        <end position="630"/>
    </location>
</feature>
<feature type="region of interest" description="Disordered" evidence="3">
    <location>
        <begin position="780"/>
        <end position="873"/>
    </location>
</feature>
<feature type="region of interest" description="Disordered" evidence="3">
    <location>
        <begin position="1291"/>
        <end position="1318"/>
    </location>
</feature>
<feature type="compositionally biased region" description="Basic residues" evidence="3">
    <location>
        <begin position="1"/>
        <end position="11"/>
    </location>
</feature>
<feature type="compositionally biased region" description="Pro residues" evidence="3">
    <location>
        <begin position="44"/>
        <end position="56"/>
    </location>
</feature>
<feature type="compositionally biased region" description="Acidic residues" evidence="3">
    <location>
        <begin position="74"/>
        <end position="91"/>
    </location>
</feature>
<feature type="compositionally biased region" description="Basic and acidic residues" evidence="3">
    <location>
        <begin position="133"/>
        <end position="143"/>
    </location>
</feature>
<feature type="compositionally biased region" description="Acidic residues" evidence="3">
    <location>
        <begin position="159"/>
        <end position="174"/>
    </location>
</feature>
<feature type="compositionally biased region" description="Basic residues" evidence="3">
    <location>
        <begin position="206"/>
        <end position="226"/>
    </location>
</feature>
<feature type="compositionally biased region" description="Low complexity" evidence="3">
    <location>
        <begin position="228"/>
        <end position="257"/>
    </location>
</feature>
<feature type="compositionally biased region" description="Low complexity" evidence="3">
    <location>
        <begin position="268"/>
        <end position="278"/>
    </location>
</feature>
<feature type="compositionally biased region" description="Pro residues" evidence="3">
    <location>
        <begin position="299"/>
        <end position="308"/>
    </location>
</feature>
<feature type="compositionally biased region" description="Low complexity" evidence="3">
    <location>
        <begin position="309"/>
        <end position="320"/>
    </location>
</feature>
<feature type="compositionally biased region" description="Basic and acidic residues" evidence="3">
    <location>
        <begin position="547"/>
        <end position="564"/>
    </location>
</feature>
<feature type="compositionally biased region" description="Low complexity" evidence="3">
    <location>
        <begin position="566"/>
        <end position="580"/>
    </location>
</feature>
<feature type="compositionally biased region" description="Pro residues" evidence="3">
    <location>
        <begin position="799"/>
        <end position="808"/>
    </location>
</feature>
<feature type="compositionally biased region" description="Pro residues" evidence="3">
    <location>
        <begin position="821"/>
        <end position="843"/>
    </location>
</feature>
<feature type="compositionally biased region" description="Low complexity" evidence="3">
    <location>
        <begin position="844"/>
        <end position="863"/>
    </location>
</feature>
<feature type="compositionally biased region" description="Acidic residues" evidence="3">
    <location>
        <begin position="1303"/>
        <end position="1318"/>
    </location>
</feature>
<evidence type="ECO:0000250" key="1"/>
<evidence type="ECO:0000250" key="2">
    <source>
        <dbReference type="UniProtKB" id="P08392"/>
    </source>
</evidence>
<evidence type="ECO:0000256" key="3">
    <source>
        <dbReference type="SAM" id="MobiDB-lite"/>
    </source>
</evidence>
<evidence type="ECO:0000269" key="4">
    <source>
    </source>
</evidence>
<evidence type="ECO:0000305" key="5"/>
<accession>P90493</accession>
<accession>O12645</accession>
<accession>O12646</accession>
<organism>
    <name type="scientific">Human herpesvirus 2 (strain HG52)</name>
    <name type="common">HHV-2</name>
    <name type="synonym">Human herpes simplex virus 2</name>
    <dbReference type="NCBI Taxonomy" id="10315"/>
    <lineage>
        <taxon>Viruses</taxon>
        <taxon>Duplodnaviria</taxon>
        <taxon>Heunggongvirae</taxon>
        <taxon>Peploviricota</taxon>
        <taxon>Herviviricetes</taxon>
        <taxon>Herpesvirales</taxon>
        <taxon>Orthoherpesviridae</taxon>
        <taxon>Alphaherpesvirinae</taxon>
        <taxon>Simplexvirus</taxon>
        <taxon>Simplexvirus humanalpha2</taxon>
        <taxon>Human herpesvirus 2</taxon>
    </lineage>
</organism>
<comment type="function">
    <text evidence="2 4">Plays an essential role in the regulation of viral gene expression by both activating and repressing host RNA polymerase II-mediated transcription (PubMed:30619292). Binds with high affinity to the sequence 5'-ATCGTC-3'. Activates transcription by recruiting a form of the host TFIID to promoters and stabilizing the pre-initiation complex formation. Negatively regulates its own transcription. This immediate early (IE) protein is absolutely necessary for the transition from IE transcription to later viral gene transcription (By similarity). In addition, binds to the host promoters of CXCR3 ligands including CXCL9, CXCL10, and CXCL11 and interacts with TBP to activate their transcription. In turn, mediates CD4+ T-cell migration (PubMed:30619292).</text>
</comment>
<comment type="subunit">
    <text evidence="2 4">Homodimer. Interacts with transcriptional regulator ICP27; this interaction is required for proper incorporation of ICP4 into virions (By similarity). Interacts with host TBP; theis interaction helps the stabilization of the pre-initiation complex on specific promoters (PubMed:30619292). Interacts with host GTF2B.</text>
</comment>
<comment type="subcellular location">
    <subcellularLocation>
        <location evidence="2">Host nucleus</location>
    </subcellularLocation>
    <subcellularLocation>
        <location evidence="2">Host cytoplasm</location>
    </subcellularLocation>
    <subcellularLocation>
        <location evidence="2">Virion tegument</location>
    </subcellularLocation>
    <text evidence="1">Localizes to the cytoplasm when phosphorylated.</text>
</comment>
<comment type="domain">
    <text evidence="2">The N-terminal and C-terminal domains are required for the transcriptional activation function of ICP4.</text>
</comment>
<comment type="PTM">
    <text evidence="2">ADP-ribosylated.</text>
</comment>
<comment type="PTM">
    <text evidence="2">The long stretch of Ser is a major site of phosphorylation. Only the phosphorylated forms are capable of interacting with beta or gamma genes.</text>
</comment>
<comment type="similarity">
    <text evidence="5">Belongs to the herpesviridae ICP4 family.</text>
</comment>
<dbReference type="EMBL" id="Z86099">
    <property type="protein sequence ID" value="CAB06701.1"/>
    <property type="molecule type" value="Genomic_DNA"/>
</dbReference>
<dbReference type="EMBL" id="Z86099">
    <property type="protein sequence ID" value="CAB06707.1"/>
    <property type="molecule type" value="Genomic_DNA"/>
</dbReference>
<dbReference type="SMR" id="P90493"/>
<dbReference type="CD-CODE" id="F289E8A4">
    <property type="entry name" value="viral replication compartment (VRC)"/>
</dbReference>
<dbReference type="Proteomes" id="UP000001874">
    <property type="component" value="Segment"/>
</dbReference>
<dbReference type="GO" id="GO:0030430">
    <property type="term" value="C:host cell cytoplasm"/>
    <property type="evidence" value="ECO:0007669"/>
    <property type="project" value="UniProtKB-SubCell"/>
</dbReference>
<dbReference type="GO" id="GO:0042025">
    <property type="term" value="C:host cell nucleus"/>
    <property type="evidence" value="ECO:0007669"/>
    <property type="project" value="UniProtKB-SubCell"/>
</dbReference>
<dbReference type="GO" id="GO:0019033">
    <property type="term" value="C:viral tegument"/>
    <property type="evidence" value="ECO:0007669"/>
    <property type="project" value="UniProtKB-SubCell"/>
</dbReference>
<dbReference type="GO" id="GO:0003677">
    <property type="term" value="F:DNA binding"/>
    <property type="evidence" value="ECO:0007669"/>
    <property type="project" value="UniProtKB-KW"/>
</dbReference>
<dbReference type="GO" id="GO:0039695">
    <property type="term" value="P:DNA-templated viral transcription"/>
    <property type="evidence" value="ECO:0000250"/>
    <property type="project" value="UniProtKB"/>
</dbReference>
<dbReference type="GO" id="GO:0045893">
    <property type="term" value="P:positive regulation of DNA-templated transcription"/>
    <property type="evidence" value="ECO:0007669"/>
    <property type="project" value="InterPro"/>
</dbReference>
<dbReference type="InterPro" id="IPR005205">
    <property type="entry name" value="Herpes_ICP4_C"/>
</dbReference>
<dbReference type="InterPro" id="IPR005206">
    <property type="entry name" value="Herpes_ICP4_N"/>
</dbReference>
<dbReference type="Pfam" id="PF03585">
    <property type="entry name" value="Herpes_ICP4_C"/>
    <property type="match status" value="1"/>
</dbReference>
<dbReference type="Pfam" id="PF03584">
    <property type="entry name" value="Herpes_ICP4_N"/>
    <property type="match status" value="1"/>
</dbReference>
<organismHost>
    <name type="scientific">Homo sapiens</name>
    <name type="common">Human</name>
    <dbReference type="NCBI Taxonomy" id="9606"/>
</organismHost>
<name>ICP4_HHV2H</name>